<evidence type="ECO:0000255" key="1">
    <source>
        <dbReference type="HAMAP-Rule" id="MF_00616"/>
    </source>
</evidence>
<feature type="chain" id="PRO_0000120550" description="Ureidoglycolate lyase">
    <location>
        <begin position="1"/>
        <end position="169"/>
    </location>
</feature>
<name>ALLA_PSEAE</name>
<organism>
    <name type="scientific">Pseudomonas aeruginosa (strain ATCC 15692 / DSM 22644 / CIP 104116 / JCM 14847 / LMG 12228 / 1C / PRS 101 / PAO1)</name>
    <dbReference type="NCBI Taxonomy" id="208964"/>
    <lineage>
        <taxon>Bacteria</taxon>
        <taxon>Pseudomonadati</taxon>
        <taxon>Pseudomonadota</taxon>
        <taxon>Gammaproteobacteria</taxon>
        <taxon>Pseudomonadales</taxon>
        <taxon>Pseudomonadaceae</taxon>
        <taxon>Pseudomonas</taxon>
    </lineage>
</organism>
<keyword id="KW-0456">Lyase</keyword>
<keyword id="KW-0659">Purine metabolism</keyword>
<keyword id="KW-1185">Reference proteome</keyword>
<accession>Q9I3J9</accession>
<protein>
    <recommendedName>
        <fullName evidence="1">Ureidoglycolate lyase</fullName>
        <ecNumber evidence="1">4.3.2.3</ecNumber>
    </recommendedName>
    <alternativeName>
        <fullName evidence="1">Ureidoglycolatase</fullName>
    </alternativeName>
</protein>
<gene>
    <name evidence="1" type="primary">allA</name>
    <name type="ordered locus">PA1514</name>
</gene>
<comment type="function">
    <text evidence="1">Catalyzes the catabolism of the allantoin degradation intermediate (S)-ureidoglycolate, generating urea and glyoxylate. Involved in the utilization of allantoin as nitrogen source.</text>
</comment>
<comment type="catalytic activity">
    <reaction evidence="1">
        <text>(S)-ureidoglycolate = urea + glyoxylate</text>
        <dbReference type="Rhea" id="RHEA:11304"/>
        <dbReference type="ChEBI" id="CHEBI:16199"/>
        <dbReference type="ChEBI" id="CHEBI:36655"/>
        <dbReference type="ChEBI" id="CHEBI:57296"/>
        <dbReference type="EC" id="4.3.2.3"/>
    </reaction>
</comment>
<comment type="cofactor">
    <cofactor evidence="1">
        <name>Ni(2+)</name>
        <dbReference type="ChEBI" id="CHEBI:49786"/>
    </cofactor>
</comment>
<comment type="pathway">
    <text evidence="1">Nitrogen metabolism; (S)-allantoin degradation.</text>
</comment>
<comment type="subunit">
    <text evidence="1">Homodimer.</text>
</comment>
<comment type="similarity">
    <text evidence="1">Belongs to the ureidoglycolate lyase family.</text>
</comment>
<sequence>MRTLKIEPLTKEAFAPFGDVIETAGSDYFMINNGSTRRYHKLATVETAQPEDNAIISIFSAEKLEMPLRIRMLERHPLGSQAFIPLLGNPFLVVVAPLGDVPVPGLVRAFLTNGRQGVNYHRGVWHHPVLTIEKRDDFLVVDRSGSGNNCDEHFFTEDEQLLLDPQSNQ</sequence>
<proteinExistence type="inferred from homology"/>
<reference key="1">
    <citation type="journal article" date="2000" name="Nature">
        <title>Complete genome sequence of Pseudomonas aeruginosa PAO1, an opportunistic pathogen.</title>
        <authorList>
            <person name="Stover C.K."/>
            <person name="Pham X.-Q.T."/>
            <person name="Erwin A.L."/>
            <person name="Mizoguchi S.D."/>
            <person name="Warrener P."/>
            <person name="Hickey M.J."/>
            <person name="Brinkman F.S.L."/>
            <person name="Hufnagle W.O."/>
            <person name="Kowalik D.J."/>
            <person name="Lagrou M."/>
            <person name="Garber R.L."/>
            <person name="Goltry L."/>
            <person name="Tolentino E."/>
            <person name="Westbrock-Wadman S."/>
            <person name="Yuan Y."/>
            <person name="Brody L.L."/>
            <person name="Coulter S.N."/>
            <person name="Folger K.R."/>
            <person name="Kas A."/>
            <person name="Larbig K."/>
            <person name="Lim R.M."/>
            <person name="Smith K.A."/>
            <person name="Spencer D.H."/>
            <person name="Wong G.K.-S."/>
            <person name="Wu Z."/>
            <person name="Paulsen I.T."/>
            <person name="Reizer J."/>
            <person name="Saier M.H. Jr."/>
            <person name="Hancock R.E.W."/>
            <person name="Lory S."/>
            <person name="Olson M.V."/>
        </authorList>
    </citation>
    <scope>NUCLEOTIDE SEQUENCE [LARGE SCALE GENOMIC DNA]</scope>
    <source>
        <strain>ATCC 15692 / DSM 22644 / CIP 104116 / JCM 14847 / LMG 12228 / 1C / PRS 101 / PAO1</strain>
    </source>
</reference>
<dbReference type="EC" id="4.3.2.3" evidence="1"/>
<dbReference type="EMBL" id="AE004091">
    <property type="protein sequence ID" value="AAG04903.1"/>
    <property type="molecule type" value="Genomic_DNA"/>
</dbReference>
<dbReference type="PIR" id="E83455">
    <property type="entry name" value="E83455"/>
</dbReference>
<dbReference type="RefSeq" id="NP_250205.1">
    <property type="nucleotide sequence ID" value="NC_002516.2"/>
</dbReference>
<dbReference type="RefSeq" id="WP_003083329.1">
    <property type="nucleotide sequence ID" value="NZ_QZGE01000032.1"/>
</dbReference>
<dbReference type="SMR" id="Q9I3J9"/>
<dbReference type="FunCoup" id="Q9I3J9">
    <property type="interactions" value="62"/>
</dbReference>
<dbReference type="STRING" id="208964.PA1514"/>
<dbReference type="PaxDb" id="208964-PA1514"/>
<dbReference type="GeneID" id="879403"/>
<dbReference type="KEGG" id="pae:PA1514"/>
<dbReference type="PATRIC" id="fig|208964.12.peg.1566"/>
<dbReference type="PseudoCAP" id="PA1514"/>
<dbReference type="HOGENOM" id="CLU_070848_1_0_6"/>
<dbReference type="InParanoid" id="Q9I3J9"/>
<dbReference type="OrthoDB" id="9804602at2"/>
<dbReference type="PhylomeDB" id="Q9I3J9"/>
<dbReference type="BioCyc" id="PAER208964:G1FZ6-1541-MONOMER"/>
<dbReference type="UniPathway" id="UPA00395"/>
<dbReference type="Proteomes" id="UP000002438">
    <property type="component" value="Chromosome"/>
</dbReference>
<dbReference type="GO" id="GO:0004848">
    <property type="term" value="F:ureidoglycolate hydrolase activity"/>
    <property type="evidence" value="ECO:0007669"/>
    <property type="project" value="InterPro"/>
</dbReference>
<dbReference type="GO" id="GO:0050385">
    <property type="term" value="F:ureidoglycolate lyase activity"/>
    <property type="evidence" value="ECO:0000318"/>
    <property type="project" value="GO_Central"/>
</dbReference>
<dbReference type="GO" id="GO:0000256">
    <property type="term" value="P:allantoin catabolic process"/>
    <property type="evidence" value="ECO:0007669"/>
    <property type="project" value="UniProtKB-UniRule"/>
</dbReference>
<dbReference type="GO" id="GO:0006145">
    <property type="term" value="P:purine nucleobase catabolic process"/>
    <property type="evidence" value="ECO:0007669"/>
    <property type="project" value="UniProtKB-UniRule"/>
</dbReference>
<dbReference type="CDD" id="cd20298">
    <property type="entry name" value="cupin_UAH"/>
    <property type="match status" value="1"/>
</dbReference>
<dbReference type="FunFam" id="2.60.120.480:FF:000001">
    <property type="entry name" value="Ureidoglycolate lyase"/>
    <property type="match status" value="1"/>
</dbReference>
<dbReference type="Gene3D" id="2.60.120.480">
    <property type="entry name" value="Ureidoglycolate hydrolase"/>
    <property type="match status" value="1"/>
</dbReference>
<dbReference type="HAMAP" id="MF_00616">
    <property type="entry name" value="Ureidogly_lyase"/>
    <property type="match status" value="1"/>
</dbReference>
<dbReference type="InterPro" id="IPR011051">
    <property type="entry name" value="RmlC_Cupin_sf"/>
</dbReference>
<dbReference type="InterPro" id="IPR047233">
    <property type="entry name" value="UAH_cupin"/>
</dbReference>
<dbReference type="InterPro" id="IPR007247">
    <property type="entry name" value="Ureidogly_lyase"/>
</dbReference>
<dbReference type="InterPro" id="IPR023525">
    <property type="entry name" value="Ureidogly_lyase_bac"/>
</dbReference>
<dbReference type="InterPro" id="IPR024060">
    <property type="entry name" value="Ureidoglycolate_lyase_dom_sf"/>
</dbReference>
<dbReference type="NCBIfam" id="NF002949">
    <property type="entry name" value="PRK03606.1-2"/>
    <property type="match status" value="1"/>
</dbReference>
<dbReference type="NCBIfam" id="NF009932">
    <property type="entry name" value="PRK13395.1"/>
    <property type="match status" value="1"/>
</dbReference>
<dbReference type="PANTHER" id="PTHR21221">
    <property type="entry name" value="UREIDOGLYCOLATE HYDROLASE"/>
    <property type="match status" value="1"/>
</dbReference>
<dbReference type="PANTHER" id="PTHR21221:SF1">
    <property type="entry name" value="UREIDOGLYCOLATE LYASE"/>
    <property type="match status" value="1"/>
</dbReference>
<dbReference type="Pfam" id="PF04115">
    <property type="entry name" value="Ureidogly_lyase"/>
    <property type="match status" value="1"/>
</dbReference>
<dbReference type="PIRSF" id="PIRSF017306">
    <property type="entry name" value="Ureidogly_hydro"/>
    <property type="match status" value="1"/>
</dbReference>
<dbReference type="SUPFAM" id="SSF51182">
    <property type="entry name" value="RmlC-like cupins"/>
    <property type="match status" value="1"/>
</dbReference>